<name>THOC6_RAT</name>
<dbReference type="EMBL" id="BC079149">
    <property type="protein sequence ID" value="AAH79149.1"/>
    <property type="molecule type" value="mRNA"/>
</dbReference>
<dbReference type="RefSeq" id="NP_077360.2">
    <property type="nucleotide sequence ID" value="NM_024384.2"/>
</dbReference>
<dbReference type="SMR" id="Q6AY87"/>
<dbReference type="FunCoup" id="Q6AY87">
    <property type="interactions" value="1827"/>
</dbReference>
<dbReference type="STRING" id="10116.ENSRNOP00000004672"/>
<dbReference type="iPTMnet" id="Q6AY87"/>
<dbReference type="PhosphoSitePlus" id="Q6AY87"/>
<dbReference type="jPOST" id="Q6AY87"/>
<dbReference type="PaxDb" id="10116-ENSRNOP00000004672"/>
<dbReference type="Ensembl" id="ENSRNOT00000004672.4">
    <property type="protein sequence ID" value="ENSRNOP00000004672.3"/>
    <property type="gene ID" value="ENSRNOG00000003497.5"/>
</dbReference>
<dbReference type="GeneID" id="79227"/>
<dbReference type="KEGG" id="rno:79227"/>
<dbReference type="UCSC" id="RGD:708553">
    <property type="organism name" value="rat"/>
</dbReference>
<dbReference type="AGR" id="RGD:708553"/>
<dbReference type="CTD" id="79228"/>
<dbReference type="RGD" id="708553">
    <property type="gene designation" value="Thoc6"/>
</dbReference>
<dbReference type="eggNOG" id="KOG0649">
    <property type="taxonomic scope" value="Eukaryota"/>
</dbReference>
<dbReference type="GeneTree" id="ENSGT00390000015278"/>
<dbReference type="HOGENOM" id="CLU_060667_0_0_1"/>
<dbReference type="InParanoid" id="Q6AY87"/>
<dbReference type="OrthoDB" id="21837at9989"/>
<dbReference type="PhylomeDB" id="Q6AY87"/>
<dbReference type="TreeFam" id="TF324760"/>
<dbReference type="Reactome" id="R-RNO-159236">
    <property type="pathway name" value="Transport of Mature mRNA derived from an Intron-Containing Transcript"/>
</dbReference>
<dbReference type="Reactome" id="R-RNO-72187">
    <property type="pathway name" value="mRNA 3'-end processing"/>
</dbReference>
<dbReference type="Reactome" id="R-RNO-73856">
    <property type="pathway name" value="RNA Polymerase II Transcription Termination"/>
</dbReference>
<dbReference type="PRO" id="PR:Q6AY87"/>
<dbReference type="Proteomes" id="UP000002494">
    <property type="component" value="Chromosome 10"/>
</dbReference>
<dbReference type="Bgee" id="ENSRNOG00000003497">
    <property type="expression patterns" value="Expressed in thymus and 20 other cell types or tissues"/>
</dbReference>
<dbReference type="ExpressionAtlas" id="Q6AY87">
    <property type="expression patterns" value="baseline and differential"/>
</dbReference>
<dbReference type="GO" id="GO:0000781">
    <property type="term" value="C:chromosome, telomeric region"/>
    <property type="evidence" value="ECO:0000266"/>
    <property type="project" value="RGD"/>
</dbReference>
<dbReference type="GO" id="GO:0016607">
    <property type="term" value="C:nuclear speck"/>
    <property type="evidence" value="ECO:0007669"/>
    <property type="project" value="UniProtKB-SubCell"/>
</dbReference>
<dbReference type="GO" id="GO:0005634">
    <property type="term" value="C:nucleus"/>
    <property type="evidence" value="ECO:0000250"/>
    <property type="project" value="UniProtKB"/>
</dbReference>
<dbReference type="GO" id="GO:0000347">
    <property type="term" value="C:THO complex"/>
    <property type="evidence" value="ECO:0000266"/>
    <property type="project" value="RGD"/>
</dbReference>
<dbReference type="GO" id="GO:0000445">
    <property type="term" value="C:THO complex part of transcription export complex"/>
    <property type="evidence" value="ECO:0000266"/>
    <property type="project" value="RGD"/>
</dbReference>
<dbReference type="GO" id="GO:0000346">
    <property type="term" value="C:transcription export complex"/>
    <property type="evidence" value="ECO:0000266"/>
    <property type="project" value="RGD"/>
</dbReference>
<dbReference type="GO" id="GO:0003723">
    <property type="term" value="F:RNA binding"/>
    <property type="evidence" value="ECO:0007669"/>
    <property type="project" value="UniProtKB-KW"/>
</dbReference>
<dbReference type="GO" id="GO:0006915">
    <property type="term" value="P:apoptotic process"/>
    <property type="evidence" value="ECO:0007669"/>
    <property type="project" value="UniProtKB-KW"/>
</dbReference>
<dbReference type="GO" id="GO:0007417">
    <property type="term" value="P:central nervous system development"/>
    <property type="evidence" value="ECO:0000250"/>
    <property type="project" value="UniProtKB"/>
</dbReference>
<dbReference type="GO" id="GO:0006406">
    <property type="term" value="P:mRNA export from nucleus"/>
    <property type="evidence" value="ECO:0000266"/>
    <property type="project" value="RGD"/>
</dbReference>
<dbReference type="GO" id="GO:0006397">
    <property type="term" value="P:mRNA processing"/>
    <property type="evidence" value="ECO:0007669"/>
    <property type="project" value="UniProtKB-KW"/>
</dbReference>
<dbReference type="GO" id="GO:0008380">
    <property type="term" value="P:RNA splicing"/>
    <property type="evidence" value="ECO:0007669"/>
    <property type="project" value="UniProtKB-KW"/>
</dbReference>
<dbReference type="FunFam" id="2.130.10.10:FF:000240">
    <property type="entry name" value="THO complex subunit 6 homolog isoform X1"/>
    <property type="match status" value="1"/>
</dbReference>
<dbReference type="Gene3D" id="2.130.10.10">
    <property type="entry name" value="YVTN repeat-like/Quinoprotein amine dehydrogenase"/>
    <property type="match status" value="1"/>
</dbReference>
<dbReference type="InterPro" id="IPR042626">
    <property type="entry name" value="THOC6"/>
</dbReference>
<dbReference type="InterPro" id="IPR015943">
    <property type="entry name" value="WD40/YVTN_repeat-like_dom_sf"/>
</dbReference>
<dbReference type="InterPro" id="IPR019775">
    <property type="entry name" value="WD40_repeat_CS"/>
</dbReference>
<dbReference type="InterPro" id="IPR036322">
    <property type="entry name" value="WD40_repeat_dom_sf"/>
</dbReference>
<dbReference type="InterPro" id="IPR001680">
    <property type="entry name" value="WD40_rpt"/>
</dbReference>
<dbReference type="PANTHER" id="PTHR44411">
    <property type="entry name" value="THO COMPLEX SUBUNIT 6 HOMOLOG"/>
    <property type="match status" value="1"/>
</dbReference>
<dbReference type="PANTHER" id="PTHR44411:SF1">
    <property type="entry name" value="THO COMPLEX SUBUNIT 6 HOMOLOG"/>
    <property type="match status" value="1"/>
</dbReference>
<dbReference type="Pfam" id="PF00400">
    <property type="entry name" value="WD40"/>
    <property type="match status" value="2"/>
</dbReference>
<dbReference type="SMART" id="SM00320">
    <property type="entry name" value="WD40"/>
    <property type="match status" value="3"/>
</dbReference>
<dbReference type="SUPFAM" id="SSF50978">
    <property type="entry name" value="WD40 repeat-like"/>
    <property type="match status" value="1"/>
</dbReference>
<dbReference type="PROSITE" id="PS00678">
    <property type="entry name" value="WD_REPEATS_1"/>
    <property type="match status" value="1"/>
</dbReference>
<dbReference type="PROSITE" id="PS50082">
    <property type="entry name" value="WD_REPEATS_2"/>
    <property type="match status" value="1"/>
</dbReference>
<dbReference type="PROSITE" id="PS50294">
    <property type="entry name" value="WD_REPEATS_REGION"/>
    <property type="match status" value="1"/>
</dbReference>
<evidence type="ECO:0000250" key="1"/>
<evidence type="ECO:0000250" key="2">
    <source>
        <dbReference type="UniProtKB" id="Q86W42"/>
    </source>
</evidence>
<evidence type="ECO:0000305" key="3"/>
<reference key="1">
    <citation type="journal article" date="2004" name="Genome Res.">
        <title>The status, quality, and expansion of the NIH full-length cDNA project: the Mammalian Gene Collection (MGC).</title>
        <authorList>
            <consortium name="The MGC Project Team"/>
        </authorList>
    </citation>
    <scope>NUCLEOTIDE SEQUENCE [LARGE SCALE MRNA]</scope>
    <source>
        <tissue>Kidney</tissue>
    </source>
</reference>
<sequence>MEHATPLAVPLGQAEVFQALQRLHMTIFSQSVSPCGKFLAAGNNYGQIAIFSLSAALSSEAKEESKKPMVTFHAHDGPVYSMVSTDRHLLSAGDGEVKGWLWAEILKKGCKELWRRQPPYRTSLEVPEINALLLVPKENSLILAGGDCQLHTMDLETGTFTRALRGHTDYIHCLALRERSPEVLSGGEDGAVRLWDLRIAKEVQTIEVYKHEECSRPHNGRWIGCLATDSDWMVCGGGPALTLWHLRSSTPTTVFPIRAPQKHVTFYQDLILSAGQGCCVNHWQLSGELKAQVPGSSPGLLSLSLNQQPAAPECKVLTASGNSCRVDVFTNLGYRAFSLSF</sequence>
<proteinExistence type="evidence at transcript level"/>
<accession>Q6AY87</accession>
<feature type="chain" id="PRO_0000233160" description="THO complex subunit 6 homolog">
    <location>
        <begin position="1"/>
        <end position="341"/>
    </location>
</feature>
<feature type="repeat" description="WD 1" evidence="2">
    <location>
        <begin position="22"/>
        <end position="61"/>
    </location>
</feature>
<feature type="repeat" description="WD 2" evidence="2">
    <location>
        <begin position="74"/>
        <end position="112"/>
    </location>
</feature>
<feature type="repeat" description="WD 3" evidence="2">
    <location>
        <begin position="124"/>
        <end position="163"/>
    </location>
</feature>
<feature type="repeat" description="WD 4" evidence="2">
    <location>
        <begin position="166"/>
        <end position="205"/>
    </location>
</feature>
<feature type="repeat" description="WD 5" evidence="2">
    <location>
        <begin position="215"/>
        <end position="254"/>
    </location>
</feature>
<feature type="repeat" description="WD 6" evidence="2">
    <location>
        <begin position="256"/>
        <end position="293"/>
    </location>
</feature>
<feature type="repeat" description="WD 7" evidence="2">
    <location>
        <begin position="295"/>
        <end position="339"/>
    </location>
</feature>
<feature type="modified residue" description="Phosphoserine" evidence="2">
    <location>
        <position position="180"/>
    </location>
</feature>
<organism>
    <name type="scientific">Rattus norvegicus</name>
    <name type="common">Rat</name>
    <dbReference type="NCBI Taxonomy" id="10116"/>
    <lineage>
        <taxon>Eukaryota</taxon>
        <taxon>Metazoa</taxon>
        <taxon>Chordata</taxon>
        <taxon>Craniata</taxon>
        <taxon>Vertebrata</taxon>
        <taxon>Euteleostomi</taxon>
        <taxon>Mammalia</taxon>
        <taxon>Eutheria</taxon>
        <taxon>Euarchontoglires</taxon>
        <taxon>Glires</taxon>
        <taxon>Rodentia</taxon>
        <taxon>Myomorpha</taxon>
        <taxon>Muroidea</taxon>
        <taxon>Muridae</taxon>
        <taxon>Murinae</taxon>
        <taxon>Rattus</taxon>
    </lineage>
</organism>
<comment type="function">
    <text evidence="2">Component of the THO subcomplex of the TREX complex which is thought to couple mRNA transcription, processing and nuclear export, and which specifically associates with spliced mRNA and not with unspliced pre-mRNA. Plays a key structural role in the oligomerization of the THO-DDX39B complex. TREX is recruited to spliced mRNAs by a transcription-independent mechanism, binds to mRNA upstream of the exon-junction complex (EJC) and is recruited in a splicing- and cap-dependent manner to a region near the 5' end of the mRNA where it functions in mRNA export to the cytoplasm via the TAP/NXF1 pathway. Plays a role in apoptosis negative control involved in brain development.</text>
</comment>
<comment type="subunit">
    <text evidence="2">Component of the THO subcomplex, which is composed of THOC1, THOC2, THOC3, THOC5, THOC6 and THOC7. The THO subcomplex interacts with DDX39B to form the THO-DDX39B complex which multimerizes into a 28-subunit tetrameric assembly. Component of the transcription/export (TREX) complex at least composed of ALYREF/THOC4, DDX39B, SARNP/CIP29, CHTOP and the THO subcomplex; in the complex interacts with THOC5; together with THOC5 and THOC7, plays a key structural role in the oligomerization of the THO-DDX39B complex. TREX seems to have a dynamic structure involving ATP-dependent remodeling.</text>
</comment>
<comment type="subcellular location">
    <subcellularLocation>
        <location evidence="1">Nucleus</location>
    </subcellularLocation>
    <subcellularLocation>
        <location evidence="1">Nucleus speckle</location>
    </subcellularLocation>
</comment>
<comment type="similarity">
    <text evidence="3">Belongs to the WD repeat THOC6 family.</text>
</comment>
<gene>
    <name type="primary">Thoc6</name>
    <name type="synonym">Pdrp</name>
    <name type="synonym">wdr58</name>
</gene>
<keyword id="KW-0053">Apoptosis</keyword>
<keyword id="KW-0217">Developmental protein</keyword>
<keyword id="KW-0507">mRNA processing</keyword>
<keyword id="KW-0508">mRNA splicing</keyword>
<keyword id="KW-0509">mRNA transport</keyword>
<keyword id="KW-0539">Nucleus</keyword>
<keyword id="KW-0597">Phosphoprotein</keyword>
<keyword id="KW-1185">Reference proteome</keyword>
<keyword id="KW-0677">Repeat</keyword>
<keyword id="KW-0694">RNA-binding</keyword>
<keyword id="KW-0813">Transport</keyword>
<keyword id="KW-0853">WD repeat</keyword>
<protein>
    <recommendedName>
        <fullName>THO complex subunit 6 homolog</fullName>
    </recommendedName>
    <alternativeName>
        <fullName>WD repeat-containing protein 58</fullName>
    </alternativeName>
</protein>